<keyword id="KW-1185">Reference proteome</keyword>
<keyword id="KW-0687">Ribonucleoprotein</keyword>
<keyword id="KW-0689">Ribosomal protein</keyword>
<feature type="chain" id="PRO_1000017469" description="Large ribosomal subunit protein bL27">
    <location>
        <begin position="1"/>
        <end position="87"/>
    </location>
</feature>
<accession>A5EVR0</accession>
<reference key="1">
    <citation type="journal article" date="2007" name="Nat. Biotechnol.">
        <title>Genome sequence and identification of candidate vaccine antigens from the animal pathogen Dichelobacter nodosus.</title>
        <authorList>
            <person name="Myers G.S.A."/>
            <person name="Parker D."/>
            <person name="Al-Hasani K."/>
            <person name="Kennan R.M."/>
            <person name="Seemann T."/>
            <person name="Ren Q."/>
            <person name="Badger J.H."/>
            <person name="Selengut J.D."/>
            <person name="Deboy R.T."/>
            <person name="Tettelin H."/>
            <person name="Boyce J.D."/>
            <person name="McCarl V.P."/>
            <person name="Han X."/>
            <person name="Nelson W.C."/>
            <person name="Madupu R."/>
            <person name="Mohamoud Y."/>
            <person name="Holley T."/>
            <person name="Fedorova N."/>
            <person name="Khouri H."/>
            <person name="Bottomley S.P."/>
            <person name="Whittington R.J."/>
            <person name="Adler B."/>
            <person name="Songer J.G."/>
            <person name="Rood J.I."/>
            <person name="Paulsen I.T."/>
        </authorList>
    </citation>
    <scope>NUCLEOTIDE SEQUENCE [LARGE SCALE GENOMIC DNA]</scope>
    <source>
        <strain>VCS1703A</strain>
    </source>
</reference>
<dbReference type="EMBL" id="CP000513">
    <property type="protein sequence ID" value="ABQ13772.1"/>
    <property type="molecule type" value="Genomic_DNA"/>
</dbReference>
<dbReference type="RefSeq" id="WP_012030823.1">
    <property type="nucleotide sequence ID" value="NC_009446.1"/>
</dbReference>
<dbReference type="SMR" id="A5EVR0"/>
<dbReference type="STRING" id="246195.DNO_0487"/>
<dbReference type="KEGG" id="dno:DNO_0487"/>
<dbReference type="eggNOG" id="COG0211">
    <property type="taxonomic scope" value="Bacteria"/>
</dbReference>
<dbReference type="HOGENOM" id="CLU_095424_4_1_6"/>
<dbReference type="OrthoDB" id="9803474at2"/>
<dbReference type="Proteomes" id="UP000000248">
    <property type="component" value="Chromosome"/>
</dbReference>
<dbReference type="GO" id="GO:0022625">
    <property type="term" value="C:cytosolic large ribosomal subunit"/>
    <property type="evidence" value="ECO:0007669"/>
    <property type="project" value="TreeGrafter"/>
</dbReference>
<dbReference type="GO" id="GO:0003735">
    <property type="term" value="F:structural constituent of ribosome"/>
    <property type="evidence" value="ECO:0007669"/>
    <property type="project" value="InterPro"/>
</dbReference>
<dbReference type="GO" id="GO:0006412">
    <property type="term" value="P:translation"/>
    <property type="evidence" value="ECO:0007669"/>
    <property type="project" value="UniProtKB-UniRule"/>
</dbReference>
<dbReference type="FunFam" id="2.40.50.100:FF:000001">
    <property type="entry name" value="50S ribosomal protein L27"/>
    <property type="match status" value="1"/>
</dbReference>
<dbReference type="Gene3D" id="2.40.50.100">
    <property type="match status" value="1"/>
</dbReference>
<dbReference type="HAMAP" id="MF_00539">
    <property type="entry name" value="Ribosomal_bL27"/>
    <property type="match status" value="1"/>
</dbReference>
<dbReference type="InterPro" id="IPR001684">
    <property type="entry name" value="Ribosomal_bL27"/>
</dbReference>
<dbReference type="InterPro" id="IPR018261">
    <property type="entry name" value="Ribosomal_bL27_CS"/>
</dbReference>
<dbReference type="NCBIfam" id="TIGR00062">
    <property type="entry name" value="L27"/>
    <property type="match status" value="1"/>
</dbReference>
<dbReference type="PANTHER" id="PTHR15893:SF0">
    <property type="entry name" value="LARGE RIBOSOMAL SUBUNIT PROTEIN BL27M"/>
    <property type="match status" value="1"/>
</dbReference>
<dbReference type="PANTHER" id="PTHR15893">
    <property type="entry name" value="RIBOSOMAL PROTEIN L27"/>
    <property type="match status" value="1"/>
</dbReference>
<dbReference type="Pfam" id="PF01016">
    <property type="entry name" value="Ribosomal_L27"/>
    <property type="match status" value="1"/>
</dbReference>
<dbReference type="PRINTS" id="PR00063">
    <property type="entry name" value="RIBOSOMALL27"/>
</dbReference>
<dbReference type="SUPFAM" id="SSF110324">
    <property type="entry name" value="Ribosomal L27 protein-like"/>
    <property type="match status" value="1"/>
</dbReference>
<dbReference type="PROSITE" id="PS00831">
    <property type="entry name" value="RIBOSOMAL_L27"/>
    <property type="match status" value="1"/>
</dbReference>
<comment type="similarity">
    <text evidence="1">Belongs to the bacterial ribosomal protein bL27 family.</text>
</comment>
<proteinExistence type="inferred from homology"/>
<organism>
    <name type="scientific">Dichelobacter nodosus (strain VCS1703A)</name>
    <dbReference type="NCBI Taxonomy" id="246195"/>
    <lineage>
        <taxon>Bacteria</taxon>
        <taxon>Pseudomonadati</taxon>
        <taxon>Pseudomonadota</taxon>
        <taxon>Gammaproteobacteria</taxon>
        <taxon>Cardiobacteriales</taxon>
        <taxon>Cardiobacteriaceae</taxon>
        <taxon>Dichelobacter</taxon>
    </lineage>
</organism>
<protein>
    <recommendedName>
        <fullName evidence="1">Large ribosomal subunit protein bL27</fullName>
    </recommendedName>
    <alternativeName>
        <fullName evidence="2">50S ribosomal protein L27</fullName>
    </alternativeName>
</protein>
<name>RL27_DICNV</name>
<sequence length="87" mass="9315">MAHKKAGGSSRNGRDSKAKRLGIKRFGGELVSAGSILVRQRGTPFHAGENVGMGKDHTLFATATGKVSFSIRGAEKRRFVSVEEIQS</sequence>
<gene>
    <name evidence="1" type="primary">rpmA</name>
    <name type="ordered locus">DNO_0487</name>
</gene>
<evidence type="ECO:0000255" key="1">
    <source>
        <dbReference type="HAMAP-Rule" id="MF_00539"/>
    </source>
</evidence>
<evidence type="ECO:0000305" key="2"/>